<dbReference type="EMBL" id="AE014298">
    <property type="protein sequence ID" value="AAN09114.2"/>
    <property type="molecule type" value="Genomic_DNA"/>
</dbReference>
<dbReference type="RefSeq" id="NP_726901.2">
    <property type="nucleotide sequence ID" value="NM_166998.2"/>
</dbReference>
<dbReference type="ComplexPortal" id="CPX-8067">
    <property type="entry name" value="Survival motor neuron complex, Gem4C variant"/>
</dbReference>
<dbReference type="FunCoup" id="Q8IRS9">
    <property type="interactions" value="2"/>
</dbReference>
<dbReference type="IntAct" id="Q8IRS9">
    <property type="interactions" value="2"/>
</dbReference>
<dbReference type="STRING" id="7227.FBpp0311142"/>
<dbReference type="PaxDb" id="7227-FBpp0070588"/>
<dbReference type="EnsemblMetazoa" id="FBtr0344826">
    <property type="protein sequence ID" value="FBpp0311142"/>
    <property type="gene ID" value="FBgn0052783"/>
</dbReference>
<dbReference type="GeneID" id="318207"/>
<dbReference type="KEGG" id="dme:Dmel_CG32783"/>
<dbReference type="UCSC" id="CG32783-RA">
    <property type="organism name" value="d. melanogaster"/>
</dbReference>
<dbReference type="AGR" id="FB:FBgn0052783"/>
<dbReference type="CTD" id="318207"/>
<dbReference type="FlyBase" id="FBgn0052783">
    <property type="gene designation" value="Gem4c"/>
</dbReference>
<dbReference type="VEuPathDB" id="VectorBase:FBgn0052783"/>
<dbReference type="eggNOG" id="ENOG502SDT1">
    <property type="taxonomic scope" value="Eukaryota"/>
</dbReference>
<dbReference type="GeneTree" id="ENSGT00790000123991"/>
<dbReference type="HOGENOM" id="CLU_014736_0_0_1"/>
<dbReference type="InParanoid" id="Q8IRS9"/>
<dbReference type="OMA" id="MKETEWL"/>
<dbReference type="OrthoDB" id="6588253at2759"/>
<dbReference type="PhylomeDB" id="Q8IRS9"/>
<dbReference type="GenomeRNAi" id="318207"/>
<dbReference type="Proteomes" id="UP000000803">
    <property type="component" value="Chromosome X"/>
</dbReference>
<dbReference type="Bgee" id="FBgn0052783">
    <property type="expression patterns" value="Expressed in imaginal disc and 6 other cell types or tissues"/>
</dbReference>
<dbReference type="GO" id="GO:0032797">
    <property type="term" value="C:SMN complex"/>
    <property type="evidence" value="ECO:0000314"/>
    <property type="project" value="FlyBase"/>
</dbReference>
<name>GEM4C_DROME</name>
<reference evidence="5" key="1">
    <citation type="journal article" date="2000" name="Science">
        <title>The genome sequence of Drosophila melanogaster.</title>
        <authorList>
            <person name="Adams M.D."/>
            <person name="Celniker S.E."/>
            <person name="Holt R.A."/>
            <person name="Evans C.A."/>
            <person name="Gocayne J.D."/>
            <person name="Amanatides P.G."/>
            <person name="Scherer S.E."/>
            <person name="Li P.W."/>
            <person name="Hoskins R.A."/>
            <person name="Galle R.F."/>
            <person name="George R.A."/>
            <person name="Lewis S.E."/>
            <person name="Richards S."/>
            <person name="Ashburner M."/>
            <person name="Henderson S.N."/>
            <person name="Sutton G.G."/>
            <person name="Wortman J.R."/>
            <person name="Yandell M.D."/>
            <person name="Zhang Q."/>
            <person name="Chen L.X."/>
            <person name="Brandon R.C."/>
            <person name="Rogers Y.-H.C."/>
            <person name="Blazej R.G."/>
            <person name="Champe M."/>
            <person name="Pfeiffer B.D."/>
            <person name="Wan K.H."/>
            <person name="Doyle C."/>
            <person name="Baxter E.G."/>
            <person name="Helt G."/>
            <person name="Nelson C.R."/>
            <person name="Miklos G.L.G."/>
            <person name="Abril J.F."/>
            <person name="Agbayani A."/>
            <person name="An H.-J."/>
            <person name="Andrews-Pfannkoch C."/>
            <person name="Baldwin D."/>
            <person name="Ballew R.M."/>
            <person name="Basu A."/>
            <person name="Baxendale J."/>
            <person name="Bayraktaroglu L."/>
            <person name="Beasley E.M."/>
            <person name="Beeson K.Y."/>
            <person name="Benos P.V."/>
            <person name="Berman B.P."/>
            <person name="Bhandari D."/>
            <person name="Bolshakov S."/>
            <person name="Borkova D."/>
            <person name="Botchan M.R."/>
            <person name="Bouck J."/>
            <person name="Brokstein P."/>
            <person name="Brottier P."/>
            <person name="Burtis K.C."/>
            <person name="Busam D.A."/>
            <person name="Butler H."/>
            <person name="Cadieu E."/>
            <person name="Center A."/>
            <person name="Chandra I."/>
            <person name="Cherry J.M."/>
            <person name="Cawley S."/>
            <person name="Dahlke C."/>
            <person name="Davenport L.B."/>
            <person name="Davies P."/>
            <person name="de Pablos B."/>
            <person name="Delcher A."/>
            <person name="Deng Z."/>
            <person name="Mays A.D."/>
            <person name="Dew I."/>
            <person name="Dietz S.M."/>
            <person name="Dodson K."/>
            <person name="Doup L.E."/>
            <person name="Downes M."/>
            <person name="Dugan-Rocha S."/>
            <person name="Dunkov B.C."/>
            <person name="Dunn P."/>
            <person name="Durbin K.J."/>
            <person name="Evangelista C.C."/>
            <person name="Ferraz C."/>
            <person name="Ferriera S."/>
            <person name="Fleischmann W."/>
            <person name="Fosler C."/>
            <person name="Gabrielian A.E."/>
            <person name="Garg N.S."/>
            <person name="Gelbart W.M."/>
            <person name="Glasser K."/>
            <person name="Glodek A."/>
            <person name="Gong F."/>
            <person name="Gorrell J.H."/>
            <person name="Gu Z."/>
            <person name="Guan P."/>
            <person name="Harris M."/>
            <person name="Harris N.L."/>
            <person name="Harvey D.A."/>
            <person name="Heiman T.J."/>
            <person name="Hernandez J.R."/>
            <person name="Houck J."/>
            <person name="Hostin D."/>
            <person name="Houston K.A."/>
            <person name="Howland T.J."/>
            <person name="Wei M.-H."/>
            <person name="Ibegwam C."/>
            <person name="Jalali M."/>
            <person name="Kalush F."/>
            <person name="Karpen G.H."/>
            <person name="Ke Z."/>
            <person name="Kennison J.A."/>
            <person name="Ketchum K.A."/>
            <person name="Kimmel B.E."/>
            <person name="Kodira C.D."/>
            <person name="Kraft C.L."/>
            <person name="Kravitz S."/>
            <person name="Kulp D."/>
            <person name="Lai Z."/>
            <person name="Lasko P."/>
            <person name="Lei Y."/>
            <person name="Levitsky A.A."/>
            <person name="Li J.H."/>
            <person name="Li Z."/>
            <person name="Liang Y."/>
            <person name="Lin X."/>
            <person name="Liu X."/>
            <person name="Mattei B."/>
            <person name="McIntosh T.C."/>
            <person name="McLeod M.P."/>
            <person name="McPherson D."/>
            <person name="Merkulov G."/>
            <person name="Milshina N.V."/>
            <person name="Mobarry C."/>
            <person name="Morris J."/>
            <person name="Moshrefi A."/>
            <person name="Mount S.M."/>
            <person name="Moy M."/>
            <person name="Murphy B."/>
            <person name="Murphy L."/>
            <person name="Muzny D.M."/>
            <person name="Nelson D.L."/>
            <person name="Nelson D.R."/>
            <person name="Nelson K.A."/>
            <person name="Nixon K."/>
            <person name="Nusskern D.R."/>
            <person name="Pacleb J.M."/>
            <person name="Palazzolo M."/>
            <person name="Pittman G.S."/>
            <person name="Pan S."/>
            <person name="Pollard J."/>
            <person name="Puri V."/>
            <person name="Reese M.G."/>
            <person name="Reinert K."/>
            <person name="Remington K."/>
            <person name="Saunders R.D.C."/>
            <person name="Scheeler F."/>
            <person name="Shen H."/>
            <person name="Shue B.C."/>
            <person name="Siden-Kiamos I."/>
            <person name="Simpson M."/>
            <person name="Skupski M.P."/>
            <person name="Smith T.J."/>
            <person name="Spier E."/>
            <person name="Spradling A.C."/>
            <person name="Stapleton M."/>
            <person name="Strong R."/>
            <person name="Sun E."/>
            <person name="Svirskas R."/>
            <person name="Tector C."/>
            <person name="Turner R."/>
            <person name="Venter E."/>
            <person name="Wang A.H."/>
            <person name="Wang X."/>
            <person name="Wang Z.-Y."/>
            <person name="Wassarman D.A."/>
            <person name="Weinstock G.M."/>
            <person name="Weissenbach J."/>
            <person name="Williams S.M."/>
            <person name="Woodage T."/>
            <person name="Worley K.C."/>
            <person name="Wu D."/>
            <person name="Yang S."/>
            <person name="Yao Q.A."/>
            <person name="Ye J."/>
            <person name="Yeh R.-F."/>
            <person name="Zaveri J.S."/>
            <person name="Zhan M."/>
            <person name="Zhang G."/>
            <person name="Zhao Q."/>
            <person name="Zheng L."/>
            <person name="Zheng X.H."/>
            <person name="Zhong F.N."/>
            <person name="Zhong W."/>
            <person name="Zhou X."/>
            <person name="Zhu S.C."/>
            <person name="Zhu X."/>
            <person name="Smith H.O."/>
            <person name="Gibbs R.A."/>
            <person name="Myers E.W."/>
            <person name="Rubin G.M."/>
            <person name="Venter J.C."/>
        </authorList>
    </citation>
    <scope>NUCLEOTIDE SEQUENCE [LARGE SCALE GENOMIC DNA]</scope>
    <source>
        <strain evidence="5">Berkeley</strain>
    </source>
</reference>
<reference evidence="5" key="2">
    <citation type="journal article" date="2002" name="Genome Biol.">
        <title>Annotation of the Drosophila melanogaster euchromatic genome: a systematic review.</title>
        <authorList>
            <person name="Misra S."/>
            <person name="Crosby M.A."/>
            <person name="Mungall C.J."/>
            <person name="Matthews B.B."/>
            <person name="Campbell K.S."/>
            <person name="Hradecky P."/>
            <person name="Huang Y."/>
            <person name="Kaminker J.S."/>
            <person name="Millburn G.H."/>
            <person name="Prochnik S.E."/>
            <person name="Smith C.D."/>
            <person name="Tupy J.L."/>
            <person name="Whitfield E.J."/>
            <person name="Bayraktaroglu L."/>
            <person name="Berman B.P."/>
            <person name="Bettencourt B.R."/>
            <person name="Celniker S.E."/>
            <person name="de Grey A.D.N.J."/>
            <person name="Drysdale R.A."/>
            <person name="Harris N.L."/>
            <person name="Richter J."/>
            <person name="Russo S."/>
            <person name="Schroeder A.J."/>
            <person name="Shu S.Q."/>
            <person name="Stapleton M."/>
            <person name="Yamada C."/>
            <person name="Ashburner M."/>
            <person name="Gelbart W.M."/>
            <person name="Rubin G.M."/>
            <person name="Lewis S.E."/>
        </authorList>
    </citation>
    <scope>GENOME REANNOTATION</scope>
    <source>
        <strain evidence="5">Berkeley</strain>
    </source>
</reference>
<reference key="3">
    <citation type="journal article" date="2019" name="G3 (Bethesda)">
        <title>Composition of the Survival Motor Neuron (SMN) Complex in Drosophila melanogaster.</title>
        <authorList>
            <person name="Matera A.G."/>
            <person name="Raimer A.C."/>
            <person name="Schmidt C.A."/>
            <person name="Kelly J.A."/>
            <person name="Droby G.N."/>
            <person name="Baillat D."/>
            <person name="Ten Have S."/>
            <person name="Lamond A.I."/>
            <person name="Wagner E.J."/>
            <person name="Gray K.M."/>
        </authorList>
    </citation>
    <scope>FUNCTION</scope>
    <scope>IDENTIFICATION IN THE SMN COMPLEX</scope>
    <scope>DISRUPTION PHENOTYPE</scope>
    <scope>IDENTIFICATION BY MASS SPECTROMETRY</scope>
</reference>
<proteinExistence type="evidence at protein level"/>
<sequence>MITAEKHPLDNCQLFVQLKKIFHDNNEQAKCLKDMIYWSGNDEHIEKICDQVTDLLEEHDLIIQPPDTMDPFAMNQLRGLLVYLVLNTAHDYFLCKSQWSANVMHLCNQLPPIPLFLTIAIAVNCCLMEPLEEFLACGPRWLTIQYFEAFNEALSVINSDCVETLPLLSAALRAAGRAIVNCNLPAENKQLLRQIACMEHRHILDSKQRLHTLPRPSTRKIYLAKAMDHLIEVLLYTLNDPLKREKPNCFAVYSQITEDISDSNSSDPMPDLRHFAQILLDVLRRIFQLVSVDTYMYWHEMKSKSALYNCQELICRQTAELLKVLQSDNMLGEHPVCKQMQSFADAAKTLEQRVAEMRMGELLVFLDSGMATDEELLAGLDNLFSRFIAFGNDECVETMANHLIMLTKKHAQIILSFLGQVVESEMVVEDEGISVTEVNQGDDEDETSSNDDYEELLSLVLRPLFMQLNVEDKMEVLLLRDEQNVTQGFNFKAPDHRERRIRFFNQLDYNKRFPITKFLVLCFENARQTWIDFSHLGVTHTRFSKLFWHIAQSCPKHAAFHISACADNILVNEQLLQKPYALQFTLYLYGHRQILNGLYTSARQLCVSLKDGRCPYGEDELRQAQNRFLDACAYGLAKFIEPMNLPSLQLILKLLKQISLGESNLITRGTAELNALEKEHPKLENGDDAPAVKVAKHYTYLNASLPEWRLKHWKLISHVMKTIDALRWDLATFEDFRVDNLELAVWYWQDGLSHLTFLGTECRQRILNQVNSLKHKGFWLIYLKEDTLKDTRSFLKLLTQSSAQEANDLFKKLLKKRADCAVMGDLSDAVVKVNSESAFMAFRFLFREYLIAFRSHAKHNKTITKRQHWDHLMAVVAKAPFSIRNEIMKLASKAFAVRFGINIQEQQAAKC</sequence>
<protein>
    <recommendedName>
        <fullName evidence="3">Gem-associated protein 4c</fullName>
        <shortName evidence="2">Gemin4c</shortName>
    </recommendedName>
</protein>
<accession>Q8IRS9</accession>
<comment type="function">
    <text evidence="1">Component of the survival motor neuron (SMN) complex that catalyzes the assembly of small nuclear ribonucleoproteins (snRNPs), the building blocks of the spliceosome, and thereby plays an important role in the splicing of cellular pre-mRNAs (PubMed:30563832). One of 3 almost identical paralogs (Glos/Gem4a, Gem4b and Gem4c), resulting from a genomic triplication, that have some redundant function (PubMed:30563832). Required for neuromuscular function and organismal viability (PubMed:30563832).</text>
</comment>
<comment type="subunit">
    <text evidence="1">Component of the core survival motor neuron (SMN) complex composed of Smn, Gem2, Gem3, rig/Gem5 and one of 3 almost identical Gem4 paralogs encoded by Glos/Gem4a, Gem4b or Gem4c.</text>
</comment>
<comment type="disruption phenotype">
    <text evidence="1">RNAi-mediated knockdown targeting all 3 Gem4 paralogs (Glos/Gem4a, Gem4b and Gem4c) is larval lethal.</text>
</comment>
<evidence type="ECO:0000269" key="1">
    <source>
    </source>
</evidence>
<evidence type="ECO:0000303" key="2">
    <source>
    </source>
</evidence>
<evidence type="ECO:0000305" key="3"/>
<evidence type="ECO:0000312" key="4">
    <source>
        <dbReference type="FlyBase" id="FBgn0052783"/>
    </source>
</evidence>
<evidence type="ECO:0000312" key="5">
    <source>
        <dbReference type="Proteomes" id="UP000000803"/>
    </source>
</evidence>
<gene>
    <name evidence="4" type="primary">Gem4c</name>
    <name evidence="4" type="ORF">CG32783</name>
</gene>
<feature type="chain" id="PRO_0000460836" description="Gem-associated protein 4c">
    <location>
        <begin position="1"/>
        <end position="911"/>
    </location>
</feature>
<organism evidence="5">
    <name type="scientific">Drosophila melanogaster</name>
    <name type="common">Fruit fly</name>
    <dbReference type="NCBI Taxonomy" id="7227"/>
    <lineage>
        <taxon>Eukaryota</taxon>
        <taxon>Metazoa</taxon>
        <taxon>Ecdysozoa</taxon>
        <taxon>Arthropoda</taxon>
        <taxon>Hexapoda</taxon>
        <taxon>Insecta</taxon>
        <taxon>Pterygota</taxon>
        <taxon>Neoptera</taxon>
        <taxon>Endopterygota</taxon>
        <taxon>Diptera</taxon>
        <taxon>Brachycera</taxon>
        <taxon>Muscomorpha</taxon>
        <taxon>Ephydroidea</taxon>
        <taxon>Drosophilidae</taxon>
        <taxon>Drosophila</taxon>
        <taxon>Sophophora</taxon>
    </lineage>
</organism>
<keyword id="KW-1185">Reference proteome</keyword>